<keyword id="KW-0021">Allosteric enzyme</keyword>
<keyword id="KW-0067">ATP-binding</keyword>
<keyword id="KW-0963">Cytoplasm</keyword>
<keyword id="KW-0324">Glycolysis</keyword>
<keyword id="KW-0418">Kinase</keyword>
<keyword id="KW-0460">Magnesium</keyword>
<keyword id="KW-0479">Metal-binding</keyword>
<keyword id="KW-0547">Nucleotide-binding</keyword>
<keyword id="KW-1185">Reference proteome</keyword>
<keyword id="KW-0808">Transferase</keyword>
<gene>
    <name evidence="1" type="primary">pfkA</name>
    <name type="ordered locus">SP_0896</name>
</gene>
<evidence type="ECO:0000255" key="1">
    <source>
        <dbReference type="HAMAP-Rule" id="MF_00339"/>
    </source>
</evidence>
<accession>Q97RC6</accession>
<reference key="1">
    <citation type="journal article" date="2001" name="Science">
        <title>Complete genome sequence of a virulent isolate of Streptococcus pneumoniae.</title>
        <authorList>
            <person name="Tettelin H."/>
            <person name="Nelson K.E."/>
            <person name="Paulsen I.T."/>
            <person name="Eisen J.A."/>
            <person name="Read T.D."/>
            <person name="Peterson S.N."/>
            <person name="Heidelberg J.F."/>
            <person name="DeBoy R.T."/>
            <person name="Haft D.H."/>
            <person name="Dodson R.J."/>
            <person name="Durkin A.S."/>
            <person name="Gwinn M.L."/>
            <person name="Kolonay J.F."/>
            <person name="Nelson W.C."/>
            <person name="Peterson J.D."/>
            <person name="Umayam L.A."/>
            <person name="White O."/>
            <person name="Salzberg S.L."/>
            <person name="Lewis M.R."/>
            <person name="Radune D."/>
            <person name="Holtzapple E.K."/>
            <person name="Khouri H.M."/>
            <person name="Wolf A.M."/>
            <person name="Utterback T.R."/>
            <person name="Hansen C.L."/>
            <person name="McDonald L.A."/>
            <person name="Feldblyum T.V."/>
            <person name="Angiuoli S.V."/>
            <person name="Dickinson T."/>
            <person name="Hickey E.K."/>
            <person name="Holt I.E."/>
            <person name="Loftus B.J."/>
            <person name="Yang F."/>
            <person name="Smith H.O."/>
            <person name="Venter J.C."/>
            <person name="Dougherty B.A."/>
            <person name="Morrison D.A."/>
            <person name="Hollingshead S.K."/>
            <person name="Fraser C.M."/>
        </authorList>
    </citation>
    <scope>NUCLEOTIDE SEQUENCE [LARGE SCALE GENOMIC DNA]</scope>
    <source>
        <strain>ATCC BAA-334 / TIGR4</strain>
    </source>
</reference>
<protein>
    <recommendedName>
        <fullName evidence="1">ATP-dependent 6-phosphofructokinase</fullName>
        <shortName evidence="1">ATP-PFK</shortName>
        <shortName evidence="1">Phosphofructokinase</shortName>
        <ecNumber evidence="1">2.7.1.11</ecNumber>
    </recommendedName>
    <alternativeName>
        <fullName evidence="1">Phosphohexokinase</fullName>
    </alternativeName>
</protein>
<dbReference type="EC" id="2.7.1.11" evidence="1"/>
<dbReference type="EMBL" id="AE005672">
    <property type="protein sequence ID" value="AAK75023.1"/>
    <property type="molecule type" value="Genomic_DNA"/>
</dbReference>
<dbReference type="PIR" id="F95103">
    <property type="entry name" value="F95103"/>
</dbReference>
<dbReference type="RefSeq" id="WP_000820852.1">
    <property type="nucleotide sequence ID" value="NZ_CP155539.1"/>
</dbReference>
<dbReference type="SMR" id="Q97RC6"/>
<dbReference type="PaxDb" id="170187-SP_0896"/>
<dbReference type="EnsemblBacteria" id="AAK75023">
    <property type="protein sequence ID" value="AAK75023"/>
    <property type="gene ID" value="SP_0896"/>
</dbReference>
<dbReference type="GeneID" id="45653754"/>
<dbReference type="KEGG" id="spn:SP_0896"/>
<dbReference type="eggNOG" id="COG0205">
    <property type="taxonomic scope" value="Bacteria"/>
</dbReference>
<dbReference type="PhylomeDB" id="Q97RC6"/>
<dbReference type="BioCyc" id="SPNE170187:G1FZB-919-MONOMER"/>
<dbReference type="UniPathway" id="UPA00109">
    <property type="reaction ID" value="UER00182"/>
</dbReference>
<dbReference type="Proteomes" id="UP000000585">
    <property type="component" value="Chromosome"/>
</dbReference>
<dbReference type="GO" id="GO:0005945">
    <property type="term" value="C:6-phosphofructokinase complex"/>
    <property type="evidence" value="ECO:0007669"/>
    <property type="project" value="TreeGrafter"/>
</dbReference>
<dbReference type="GO" id="GO:0003872">
    <property type="term" value="F:6-phosphofructokinase activity"/>
    <property type="evidence" value="ECO:0007669"/>
    <property type="project" value="UniProtKB-UniRule"/>
</dbReference>
<dbReference type="GO" id="GO:0016208">
    <property type="term" value="F:AMP binding"/>
    <property type="evidence" value="ECO:0007669"/>
    <property type="project" value="TreeGrafter"/>
</dbReference>
<dbReference type="GO" id="GO:0005524">
    <property type="term" value="F:ATP binding"/>
    <property type="evidence" value="ECO:0007669"/>
    <property type="project" value="UniProtKB-KW"/>
</dbReference>
<dbReference type="GO" id="GO:0070095">
    <property type="term" value="F:fructose-6-phosphate binding"/>
    <property type="evidence" value="ECO:0007669"/>
    <property type="project" value="TreeGrafter"/>
</dbReference>
<dbReference type="GO" id="GO:0042802">
    <property type="term" value="F:identical protein binding"/>
    <property type="evidence" value="ECO:0007669"/>
    <property type="project" value="TreeGrafter"/>
</dbReference>
<dbReference type="GO" id="GO:0046872">
    <property type="term" value="F:metal ion binding"/>
    <property type="evidence" value="ECO:0007669"/>
    <property type="project" value="UniProtKB-KW"/>
</dbReference>
<dbReference type="GO" id="GO:0048029">
    <property type="term" value="F:monosaccharide binding"/>
    <property type="evidence" value="ECO:0007669"/>
    <property type="project" value="TreeGrafter"/>
</dbReference>
<dbReference type="GO" id="GO:0061621">
    <property type="term" value="P:canonical glycolysis"/>
    <property type="evidence" value="ECO:0007669"/>
    <property type="project" value="TreeGrafter"/>
</dbReference>
<dbReference type="GO" id="GO:0030388">
    <property type="term" value="P:fructose 1,6-bisphosphate metabolic process"/>
    <property type="evidence" value="ECO:0007669"/>
    <property type="project" value="TreeGrafter"/>
</dbReference>
<dbReference type="GO" id="GO:0006002">
    <property type="term" value="P:fructose 6-phosphate metabolic process"/>
    <property type="evidence" value="ECO:0007669"/>
    <property type="project" value="InterPro"/>
</dbReference>
<dbReference type="CDD" id="cd00763">
    <property type="entry name" value="Bacterial_PFK"/>
    <property type="match status" value="1"/>
</dbReference>
<dbReference type="FunFam" id="3.40.50.450:FF:000001">
    <property type="entry name" value="ATP-dependent 6-phosphofructokinase"/>
    <property type="match status" value="1"/>
</dbReference>
<dbReference type="FunFam" id="3.40.50.460:FF:000002">
    <property type="entry name" value="ATP-dependent 6-phosphofructokinase"/>
    <property type="match status" value="1"/>
</dbReference>
<dbReference type="Gene3D" id="3.40.50.450">
    <property type="match status" value="1"/>
</dbReference>
<dbReference type="Gene3D" id="3.40.50.460">
    <property type="entry name" value="Phosphofructokinase domain"/>
    <property type="match status" value="1"/>
</dbReference>
<dbReference type="HAMAP" id="MF_00339">
    <property type="entry name" value="Phosphofructokinase_I_B1"/>
    <property type="match status" value="1"/>
</dbReference>
<dbReference type="InterPro" id="IPR022953">
    <property type="entry name" value="ATP_PFK"/>
</dbReference>
<dbReference type="InterPro" id="IPR012003">
    <property type="entry name" value="ATP_PFK_prok-type"/>
</dbReference>
<dbReference type="InterPro" id="IPR012828">
    <property type="entry name" value="PFKA_ATP_prok"/>
</dbReference>
<dbReference type="InterPro" id="IPR015912">
    <property type="entry name" value="Phosphofructokinase_CS"/>
</dbReference>
<dbReference type="InterPro" id="IPR000023">
    <property type="entry name" value="Phosphofructokinase_dom"/>
</dbReference>
<dbReference type="InterPro" id="IPR035966">
    <property type="entry name" value="PKF_sf"/>
</dbReference>
<dbReference type="NCBIfam" id="TIGR02482">
    <property type="entry name" value="PFKA_ATP"/>
    <property type="match status" value="1"/>
</dbReference>
<dbReference type="NCBIfam" id="NF002872">
    <property type="entry name" value="PRK03202.1"/>
    <property type="match status" value="1"/>
</dbReference>
<dbReference type="PANTHER" id="PTHR13697:SF4">
    <property type="entry name" value="ATP-DEPENDENT 6-PHOSPHOFRUCTOKINASE"/>
    <property type="match status" value="1"/>
</dbReference>
<dbReference type="PANTHER" id="PTHR13697">
    <property type="entry name" value="PHOSPHOFRUCTOKINASE"/>
    <property type="match status" value="1"/>
</dbReference>
<dbReference type="Pfam" id="PF00365">
    <property type="entry name" value="PFK"/>
    <property type="match status" value="1"/>
</dbReference>
<dbReference type="PIRSF" id="PIRSF000532">
    <property type="entry name" value="ATP_PFK_prok"/>
    <property type="match status" value="1"/>
</dbReference>
<dbReference type="PRINTS" id="PR00476">
    <property type="entry name" value="PHFRCTKINASE"/>
</dbReference>
<dbReference type="SUPFAM" id="SSF53784">
    <property type="entry name" value="Phosphofructokinase"/>
    <property type="match status" value="1"/>
</dbReference>
<dbReference type="PROSITE" id="PS00433">
    <property type="entry name" value="PHOSPHOFRUCTOKINASE"/>
    <property type="match status" value="1"/>
</dbReference>
<organism>
    <name type="scientific">Streptococcus pneumoniae serotype 4 (strain ATCC BAA-334 / TIGR4)</name>
    <dbReference type="NCBI Taxonomy" id="170187"/>
    <lineage>
        <taxon>Bacteria</taxon>
        <taxon>Bacillati</taxon>
        <taxon>Bacillota</taxon>
        <taxon>Bacilli</taxon>
        <taxon>Lactobacillales</taxon>
        <taxon>Streptococcaceae</taxon>
        <taxon>Streptococcus</taxon>
    </lineage>
</organism>
<comment type="function">
    <text evidence="1">Catalyzes the phosphorylation of D-fructose 6-phosphate to fructose 1,6-bisphosphate by ATP, the first committing step of glycolysis.</text>
</comment>
<comment type="catalytic activity">
    <reaction evidence="1">
        <text>beta-D-fructose 6-phosphate + ATP = beta-D-fructose 1,6-bisphosphate + ADP + H(+)</text>
        <dbReference type="Rhea" id="RHEA:16109"/>
        <dbReference type="ChEBI" id="CHEBI:15378"/>
        <dbReference type="ChEBI" id="CHEBI:30616"/>
        <dbReference type="ChEBI" id="CHEBI:32966"/>
        <dbReference type="ChEBI" id="CHEBI:57634"/>
        <dbReference type="ChEBI" id="CHEBI:456216"/>
        <dbReference type="EC" id="2.7.1.11"/>
    </reaction>
</comment>
<comment type="cofactor">
    <cofactor evidence="1">
        <name>Mg(2+)</name>
        <dbReference type="ChEBI" id="CHEBI:18420"/>
    </cofactor>
</comment>
<comment type="activity regulation">
    <text evidence="1">Allosterically activated by ADP and other diphosphonucleosides, and allosterically inhibited by phosphoenolpyruvate.</text>
</comment>
<comment type="pathway">
    <text evidence="1">Carbohydrate degradation; glycolysis; D-glyceraldehyde 3-phosphate and glycerone phosphate from D-glucose: step 3/4.</text>
</comment>
<comment type="subunit">
    <text evidence="1">Homotetramer.</text>
</comment>
<comment type="subcellular location">
    <subcellularLocation>
        <location evidence="1">Cytoplasm</location>
    </subcellularLocation>
</comment>
<comment type="similarity">
    <text evidence="1">Belongs to the phosphofructokinase type A (PFKA) family. ATP-dependent PFK group I subfamily. Prokaryotic clade 'B1' sub-subfamily.</text>
</comment>
<sequence>MKRIAVLTSGGDAPGMNAAIRAVVRQAISEGMEVFGIYDGYAGMVAGEIHPLDAASVGDIISRGGTFLHSARYPEFAQLEGQLKGIEQLKKHGIEGVVVIGGDGSYHGAMRLTEHGFPAIGLPGTIDNDIVGTDFTIGFDTAVTTAMDAIDKIRDTSSSHRRTFVIEVMGRNAGDIALWAGIATGADEIIIPEAGFKMEDIVASIKAGYECGKKHNIIVLAEGVMSAAEFGQKLKEAGDTSDLRVTELGHIQRGGSPTARDRVLASRMGAHAVKLLKEGIGGVAVGIRNEKMVENPILGTAEEGALFSLTAEGKIVVNNPHKADIELSSLNKSLS</sequence>
<proteinExistence type="inferred from homology"/>
<feature type="chain" id="PRO_0000111990" description="ATP-dependent 6-phosphofructokinase">
    <location>
        <begin position="1"/>
        <end position="335"/>
    </location>
</feature>
<feature type="active site" description="Proton acceptor" evidence="1">
    <location>
        <position position="127"/>
    </location>
</feature>
<feature type="binding site" evidence="1">
    <location>
        <position position="11"/>
    </location>
    <ligand>
        <name>ATP</name>
        <dbReference type="ChEBI" id="CHEBI:30616"/>
    </ligand>
</feature>
<feature type="binding site" evidence="1">
    <location>
        <begin position="21"/>
        <end position="25"/>
    </location>
    <ligand>
        <name>ADP</name>
        <dbReference type="ChEBI" id="CHEBI:456216"/>
        <note>allosteric activator; ligand shared between dimeric partners</note>
    </ligand>
</feature>
<feature type="binding site" evidence="1">
    <location>
        <begin position="72"/>
        <end position="73"/>
    </location>
    <ligand>
        <name>ATP</name>
        <dbReference type="ChEBI" id="CHEBI:30616"/>
    </ligand>
</feature>
<feature type="binding site" evidence="1">
    <location>
        <begin position="102"/>
        <end position="105"/>
    </location>
    <ligand>
        <name>ATP</name>
        <dbReference type="ChEBI" id="CHEBI:30616"/>
    </ligand>
</feature>
<feature type="binding site" evidence="1">
    <location>
        <position position="103"/>
    </location>
    <ligand>
        <name>Mg(2+)</name>
        <dbReference type="ChEBI" id="CHEBI:18420"/>
        <note>catalytic</note>
    </ligand>
</feature>
<feature type="binding site" description="in other chain" evidence="1">
    <location>
        <begin position="125"/>
        <end position="127"/>
    </location>
    <ligand>
        <name>substrate</name>
        <note>ligand shared between dimeric partners</note>
    </ligand>
</feature>
<feature type="binding site" description="in other chain" evidence="1">
    <location>
        <position position="154"/>
    </location>
    <ligand>
        <name>ADP</name>
        <dbReference type="ChEBI" id="CHEBI:456216"/>
        <note>allosteric activator; ligand shared between dimeric partners</note>
    </ligand>
</feature>
<feature type="binding site" evidence="1">
    <location>
        <position position="162"/>
    </location>
    <ligand>
        <name>substrate</name>
        <note>ligand shared between dimeric partners</note>
    </ligand>
</feature>
<feature type="binding site" description="in other chain" evidence="1">
    <location>
        <begin position="169"/>
        <end position="171"/>
    </location>
    <ligand>
        <name>substrate</name>
        <note>ligand shared between dimeric partners</note>
    </ligand>
</feature>
<feature type="binding site" description="in other chain" evidence="1">
    <location>
        <begin position="185"/>
        <end position="187"/>
    </location>
    <ligand>
        <name>ADP</name>
        <dbReference type="ChEBI" id="CHEBI:456216"/>
        <note>allosteric activator; ligand shared between dimeric partners</note>
    </ligand>
</feature>
<feature type="binding site" description="in other chain" evidence="1">
    <location>
        <begin position="213"/>
        <end position="215"/>
    </location>
    <ligand>
        <name>ADP</name>
        <dbReference type="ChEBI" id="CHEBI:456216"/>
        <note>allosteric activator; ligand shared between dimeric partners</note>
    </ligand>
</feature>
<feature type="binding site" description="in other chain" evidence="1">
    <location>
        <position position="222"/>
    </location>
    <ligand>
        <name>substrate</name>
        <note>ligand shared between dimeric partners</note>
    </ligand>
</feature>
<feature type="binding site" evidence="1">
    <location>
        <position position="244"/>
    </location>
    <ligand>
        <name>substrate</name>
        <note>ligand shared between dimeric partners</note>
    </ligand>
</feature>
<feature type="binding site" description="in other chain" evidence="1">
    <location>
        <begin position="250"/>
        <end position="253"/>
    </location>
    <ligand>
        <name>substrate</name>
        <note>ligand shared between dimeric partners</note>
    </ligand>
</feature>
<name>PFKA_STRPN</name>